<comment type="function">
    <text evidence="1">Involved in the regulation of the intracellular balance of NAD and NADP, and is a key enzyme in the biosynthesis of NADP. Catalyzes specifically the phosphorylation on 2'-hydroxyl of the adenosine moiety of NAD to yield NADP.</text>
</comment>
<comment type="catalytic activity">
    <reaction evidence="1">
        <text>NAD(+) + ATP = ADP + NADP(+) + H(+)</text>
        <dbReference type="Rhea" id="RHEA:18629"/>
        <dbReference type="ChEBI" id="CHEBI:15378"/>
        <dbReference type="ChEBI" id="CHEBI:30616"/>
        <dbReference type="ChEBI" id="CHEBI:57540"/>
        <dbReference type="ChEBI" id="CHEBI:58349"/>
        <dbReference type="ChEBI" id="CHEBI:456216"/>
        <dbReference type="EC" id="2.7.1.23"/>
    </reaction>
</comment>
<comment type="cofactor">
    <cofactor evidence="1">
        <name>a divalent metal cation</name>
        <dbReference type="ChEBI" id="CHEBI:60240"/>
    </cofactor>
</comment>
<comment type="subcellular location">
    <subcellularLocation>
        <location evidence="1">Cytoplasm</location>
    </subcellularLocation>
</comment>
<comment type="similarity">
    <text evidence="1">Belongs to the NAD kinase family.</text>
</comment>
<feature type="chain" id="PRO_0000120663" description="NAD kinase">
    <location>
        <begin position="1"/>
        <end position="269"/>
    </location>
</feature>
<feature type="active site" description="Proton acceptor" evidence="1">
    <location>
        <position position="45"/>
    </location>
</feature>
<feature type="binding site" evidence="1">
    <location>
        <begin position="45"/>
        <end position="46"/>
    </location>
    <ligand>
        <name>NAD(+)</name>
        <dbReference type="ChEBI" id="CHEBI:57540"/>
    </ligand>
</feature>
<feature type="binding site" evidence="1">
    <location>
        <begin position="122"/>
        <end position="123"/>
    </location>
    <ligand>
        <name>NAD(+)</name>
        <dbReference type="ChEBI" id="CHEBI:57540"/>
    </ligand>
</feature>
<feature type="binding site" evidence="1">
    <location>
        <position position="149"/>
    </location>
    <ligand>
        <name>NAD(+)</name>
        <dbReference type="ChEBI" id="CHEBI:57540"/>
    </ligand>
</feature>
<feature type="binding site" evidence="1">
    <location>
        <position position="151"/>
    </location>
    <ligand>
        <name>NAD(+)</name>
        <dbReference type="ChEBI" id="CHEBI:57540"/>
    </ligand>
</feature>
<feature type="binding site" evidence="1">
    <location>
        <position position="186"/>
    </location>
    <ligand>
        <name>NAD(+)</name>
        <dbReference type="ChEBI" id="CHEBI:57540"/>
    </ligand>
</feature>
<accession>P65778</accession>
<accession>Q99V84</accession>
<reference key="1">
    <citation type="journal article" date="2002" name="Lancet">
        <title>Genome and virulence determinants of high virulence community-acquired MRSA.</title>
        <authorList>
            <person name="Baba T."/>
            <person name="Takeuchi F."/>
            <person name="Kuroda M."/>
            <person name="Yuzawa H."/>
            <person name="Aoki K."/>
            <person name="Oguchi A."/>
            <person name="Nagai Y."/>
            <person name="Iwama N."/>
            <person name="Asano K."/>
            <person name="Naimi T."/>
            <person name="Kuroda H."/>
            <person name="Cui L."/>
            <person name="Yamamoto K."/>
            <person name="Hiramatsu K."/>
        </authorList>
    </citation>
    <scope>NUCLEOTIDE SEQUENCE [LARGE SCALE GENOMIC DNA]</scope>
    <source>
        <strain>MW2</strain>
    </source>
</reference>
<protein>
    <recommendedName>
        <fullName evidence="1">NAD kinase</fullName>
        <ecNumber evidence="1">2.7.1.23</ecNumber>
    </recommendedName>
    <alternativeName>
        <fullName evidence="1">ATP-dependent NAD kinase</fullName>
    </alternativeName>
</protein>
<sequence>MRYTILTKGDSKSNALKHKMMNYMKDFRMIEDSENPEIVISVGGDGTLLQAFHQYSHMLSKVAFVGVHTGHLGFYADWLPHEVEKLIIEINNSEFQVIEYPLLEIIMRYNDNGYETRYLALNEATMKTENGSTLVVDVNLRGKHFERFRGDGLCVSTPSGSTAYNKALGGALIHPSLEAMQITEIASINNRVFRTVGSPLVLPKHHTCLISPVNHDTIRMTIDHVSIKHKNVNSIQYRVANEKVRFARFRPFPFWKRVHDSFISSDEER</sequence>
<dbReference type="EC" id="2.7.1.23" evidence="1"/>
<dbReference type="EMBL" id="BA000033">
    <property type="protein sequence ID" value="BAB94753.1"/>
    <property type="molecule type" value="Genomic_DNA"/>
</dbReference>
<dbReference type="RefSeq" id="WP_001270834.1">
    <property type="nucleotide sequence ID" value="NC_003923.1"/>
</dbReference>
<dbReference type="SMR" id="P65778"/>
<dbReference type="KEGG" id="sam:MW0888"/>
<dbReference type="HOGENOM" id="CLU_008831_0_3_9"/>
<dbReference type="GO" id="GO:0005737">
    <property type="term" value="C:cytoplasm"/>
    <property type="evidence" value="ECO:0007669"/>
    <property type="project" value="UniProtKB-SubCell"/>
</dbReference>
<dbReference type="GO" id="GO:0005524">
    <property type="term" value="F:ATP binding"/>
    <property type="evidence" value="ECO:0007669"/>
    <property type="project" value="UniProtKB-KW"/>
</dbReference>
<dbReference type="GO" id="GO:0046872">
    <property type="term" value="F:metal ion binding"/>
    <property type="evidence" value="ECO:0007669"/>
    <property type="project" value="UniProtKB-UniRule"/>
</dbReference>
<dbReference type="GO" id="GO:0051287">
    <property type="term" value="F:NAD binding"/>
    <property type="evidence" value="ECO:0007669"/>
    <property type="project" value="UniProtKB-ARBA"/>
</dbReference>
<dbReference type="GO" id="GO:0003951">
    <property type="term" value="F:NAD+ kinase activity"/>
    <property type="evidence" value="ECO:0007669"/>
    <property type="project" value="UniProtKB-UniRule"/>
</dbReference>
<dbReference type="GO" id="GO:0019674">
    <property type="term" value="P:NAD metabolic process"/>
    <property type="evidence" value="ECO:0007669"/>
    <property type="project" value="InterPro"/>
</dbReference>
<dbReference type="GO" id="GO:0006741">
    <property type="term" value="P:NADP biosynthetic process"/>
    <property type="evidence" value="ECO:0007669"/>
    <property type="project" value="UniProtKB-UniRule"/>
</dbReference>
<dbReference type="FunFam" id="2.60.200.30:FF:000002">
    <property type="entry name" value="NAD kinase"/>
    <property type="match status" value="1"/>
</dbReference>
<dbReference type="Gene3D" id="3.40.50.10330">
    <property type="entry name" value="Probable inorganic polyphosphate/atp-NAD kinase, domain 1"/>
    <property type="match status" value="1"/>
</dbReference>
<dbReference type="Gene3D" id="2.60.200.30">
    <property type="entry name" value="Probable inorganic polyphosphate/atp-NAD kinase, domain 2"/>
    <property type="match status" value="1"/>
</dbReference>
<dbReference type="HAMAP" id="MF_00361">
    <property type="entry name" value="NAD_kinase"/>
    <property type="match status" value="1"/>
</dbReference>
<dbReference type="InterPro" id="IPR017438">
    <property type="entry name" value="ATP-NAD_kinase_N"/>
</dbReference>
<dbReference type="InterPro" id="IPR017437">
    <property type="entry name" value="ATP-NAD_kinase_PpnK-typ_C"/>
</dbReference>
<dbReference type="InterPro" id="IPR016064">
    <property type="entry name" value="NAD/diacylglycerol_kinase_sf"/>
</dbReference>
<dbReference type="InterPro" id="IPR002504">
    <property type="entry name" value="NADK"/>
</dbReference>
<dbReference type="NCBIfam" id="NF003424">
    <property type="entry name" value="PRK04885.1"/>
    <property type="match status" value="1"/>
</dbReference>
<dbReference type="PANTHER" id="PTHR20275">
    <property type="entry name" value="NAD KINASE"/>
    <property type="match status" value="1"/>
</dbReference>
<dbReference type="PANTHER" id="PTHR20275:SF0">
    <property type="entry name" value="NAD KINASE"/>
    <property type="match status" value="1"/>
</dbReference>
<dbReference type="Pfam" id="PF01513">
    <property type="entry name" value="NAD_kinase"/>
    <property type="match status" value="1"/>
</dbReference>
<dbReference type="Pfam" id="PF20143">
    <property type="entry name" value="NAD_kinase_C"/>
    <property type="match status" value="1"/>
</dbReference>
<dbReference type="SUPFAM" id="SSF111331">
    <property type="entry name" value="NAD kinase/diacylglycerol kinase-like"/>
    <property type="match status" value="1"/>
</dbReference>
<name>NADK_STAAW</name>
<proteinExistence type="inferred from homology"/>
<organism>
    <name type="scientific">Staphylococcus aureus (strain MW2)</name>
    <dbReference type="NCBI Taxonomy" id="196620"/>
    <lineage>
        <taxon>Bacteria</taxon>
        <taxon>Bacillati</taxon>
        <taxon>Bacillota</taxon>
        <taxon>Bacilli</taxon>
        <taxon>Bacillales</taxon>
        <taxon>Staphylococcaceae</taxon>
        <taxon>Staphylococcus</taxon>
    </lineage>
</organism>
<keyword id="KW-0067">ATP-binding</keyword>
<keyword id="KW-0963">Cytoplasm</keyword>
<keyword id="KW-0418">Kinase</keyword>
<keyword id="KW-0520">NAD</keyword>
<keyword id="KW-0521">NADP</keyword>
<keyword id="KW-0547">Nucleotide-binding</keyword>
<keyword id="KW-0808">Transferase</keyword>
<evidence type="ECO:0000255" key="1">
    <source>
        <dbReference type="HAMAP-Rule" id="MF_00361"/>
    </source>
</evidence>
<gene>
    <name evidence="1" type="primary">nadK</name>
    <name type="ordered locus">MW0888</name>
</gene>